<gene>
    <name evidence="1" type="primary">rpmI</name>
    <name type="ordered locus">BURPS1106A_1737</name>
</gene>
<organism>
    <name type="scientific">Burkholderia pseudomallei (strain 1106a)</name>
    <dbReference type="NCBI Taxonomy" id="357348"/>
    <lineage>
        <taxon>Bacteria</taxon>
        <taxon>Pseudomonadati</taxon>
        <taxon>Pseudomonadota</taxon>
        <taxon>Betaproteobacteria</taxon>
        <taxon>Burkholderiales</taxon>
        <taxon>Burkholderiaceae</taxon>
        <taxon>Burkholderia</taxon>
        <taxon>pseudomallei group</taxon>
    </lineage>
</organism>
<feature type="chain" id="PRO_1000050668" description="Large ribosomal subunit protein bL35">
    <location>
        <begin position="1"/>
        <end position="65"/>
    </location>
</feature>
<reference key="1">
    <citation type="journal article" date="2010" name="Genome Biol. Evol.">
        <title>Continuing evolution of Burkholderia mallei through genome reduction and large-scale rearrangements.</title>
        <authorList>
            <person name="Losada L."/>
            <person name="Ronning C.M."/>
            <person name="DeShazer D."/>
            <person name="Woods D."/>
            <person name="Fedorova N."/>
            <person name="Kim H.S."/>
            <person name="Shabalina S.A."/>
            <person name="Pearson T.R."/>
            <person name="Brinkac L."/>
            <person name="Tan P."/>
            <person name="Nandi T."/>
            <person name="Crabtree J."/>
            <person name="Badger J."/>
            <person name="Beckstrom-Sternberg S."/>
            <person name="Saqib M."/>
            <person name="Schutzer S.E."/>
            <person name="Keim P."/>
            <person name="Nierman W.C."/>
        </authorList>
    </citation>
    <scope>NUCLEOTIDE SEQUENCE [LARGE SCALE GENOMIC DNA]</scope>
    <source>
        <strain>1106a</strain>
    </source>
</reference>
<protein>
    <recommendedName>
        <fullName evidence="1">Large ribosomal subunit protein bL35</fullName>
    </recommendedName>
    <alternativeName>
        <fullName evidence="2">50S ribosomal protein L35</fullName>
    </alternativeName>
</protein>
<keyword id="KW-0687">Ribonucleoprotein</keyword>
<keyword id="KW-0689">Ribosomal protein</keyword>
<sequence>MPKMKTKKSAAKRFVVRPGGTVKRGQAFKRHILTKKTTKNKRHLRGATAVHDSDLNSVRAMLPFA</sequence>
<accession>A3NUI6</accession>
<evidence type="ECO:0000255" key="1">
    <source>
        <dbReference type="HAMAP-Rule" id="MF_00514"/>
    </source>
</evidence>
<evidence type="ECO:0000305" key="2"/>
<name>RL35_BURP0</name>
<dbReference type="EMBL" id="CP000572">
    <property type="protein sequence ID" value="ABN88792.1"/>
    <property type="molecule type" value="Genomic_DNA"/>
</dbReference>
<dbReference type="RefSeq" id="WP_004191477.1">
    <property type="nucleotide sequence ID" value="NC_009076.1"/>
</dbReference>
<dbReference type="SMR" id="A3NUI6"/>
<dbReference type="GeneID" id="98102115"/>
<dbReference type="KEGG" id="bpl:BURPS1106A_1737"/>
<dbReference type="HOGENOM" id="CLU_169643_1_0_4"/>
<dbReference type="Proteomes" id="UP000006738">
    <property type="component" value="Chromosome I"/>
</dbReference>
<dbReference type="GO" id="GO:0022625">
    <property type="term" value="C:cytosolic large ribosomal subunit"/>
    <property type="evidence" value="ECO:0007669"/>
    <property type="project" value="TreeGrafter"/>
</dbReference>
<dbReference type="GO" id="GO:0003735">
    <property type="term" value="F:structural constituent of ribosome"/>
    <property type="evidence" value="ECO:0007669"/>
    <property type="project" value="InterPro"/>
</dbReference>
<dbReference type="GO" id="GO:0006412">
    <property type="term" value="P:translation"/>
    <property type="evidence" value="ECO:0007669"/>
    <property type="project" value="UniProtKB-UniRule"/>
</dbReference>
<dbReference type="FunFam" id="4.10.410.60:FF:000001">
    <property type="entry name" value="50S ribosomal protein L35"/>
    <property type="match status" value="1"/>
</dbReference>
<dbReference type="Gene3D" id="4.10.410.60">
    <property type="match status" value="1"/>
</dbReference>
<dbReference type="HAMAP" id="MF_00514">
    <property type="entry name" value="Ribosomal_bL35"/>
    <property type="match status" value="1"/>
</dbReference>
<dbReference type="InterPro" id="IPR001706">
    <property type="entry name" value="Ribosomal_bL35"/>
</dbReference>
<dbReference type="InterPro" id="IPR021137">
    <property type="entry name" value="Ribosomal_bL35-like"/>
</dbReference>
<dbReference type="InterPro" id="IPR018265">
    <property type="entry name" value="Ribosomal_bL35_CS"/>
</dbReference>
<dbReference type="InterPro" id="IPR037229">
    <property type="entry name" value="Ribosomal_bL35_sf"/>
</dbReference>
<dbReference type="NCBIfam" id="TIGR00001">
    <property type="entry name" value="rpmI_bact"/>
    <property type="match status" value="1"/>
</dbReference>
<dbReference type="PANTHER" id="PTHR33343">
    <property type="entry name" value="54S RIBOSOMAL PROTEIN BL35M"/>
    <property type="match status" value="1"/>
</dbReference>
<dbReference type="PANTHER" id="PTHR33343:SF1">
    <property type="entry name" value="LARGE RIBOSOMAL SUBUNIT PROTEIN BL35M"/>
    <property type="match status" value="1"/>
</dbReference>
<dbReference type="Pfam" id="PF01632">
    <property type="entry name" value="Ribosomal_L35p"/>
    <property type="match status" value="1"/>
</dbReference>
<dbReference type="PRINTS" id="PR00064">
    <property type="entry name" value="RIBOSOMALL35"/>
</dbReference>
<dbReference type="SUPFAM" id="SSF143034">
    <property type="entry name" value="L35p-like"/>
    <property type="match status" value="1"/>
</dbReference>
<dbReference type="PROSITE" id="PS00936">
    <property type="entry name" value="RIBOSOMAL_L35"/>
    <property type="match status" value="1"/>
</dbReference>
<proteinExistence type="inferred from homology"/>
<comment type="similarity">
    <text evidence="1">Belongs to the bacterial ribosomal protein bL35 family.</text>
</comment>